<dbReference type="EMBL" id="AC003027">
    <property type="protein sequence ID" value="AAD10669.1"/>
    <property type="status" value="ALT_SEQ"/>
    <property type="molecule type" value="Genomic_DNA"/>
</dbReference>
<dbReference type="EMBL" id="CP002684">
    <property type="status" value="NOT_ANNOTATED_CDS"/>
    <property type="molecule type" value="Genomic_DNA"/>
</dbReference>
<dbReference type="EMBL" id="EU817406">
    <property type="protein sequence ID" value="ACF35259.1"/>
    <property type="molecule type" value="mRNA"/>
</dbReference>
<dbReference type="EMBL" id="EU817407">
    <property type="protein sequence ID" value="ACF35260.1"/>
    <property type="molecule type" value="mRNA"/>
</dbReference>
<dbReference type="PIR" id="D86171">
    <property type="entry name" value="D86171"/>
</dbReference>
<dbReference type="SMR" id="F4I443"/>
<dbReference type="FunCoup" id="F4I443">
    <property type="interactions" value="318"/>
</dbReference>
<dbReference type="STRING" id="3702.F4I443"/>
<dbReference type="PaxDb" id="3702-AT1G04020.1"/>
<dbReference type="ProteomicsDB" id="240812">
    <molecule id="F4I443-1"/>
</dbReference>
<dbReference type="Araport" id="AT1G04020"/>
<dbReference type="TAIR" id="AT1G04020">
    <property type="gene designation" value="BARD1"/>
</dbReference>
<dbReference type="eggNOG" id="KOG4362">
    <property type="taxonomic scope" value="Eukaryota"/>
</dbReference>
<dbReference type="InParanoid" id="F4I443"/>
<dbReference type="PRO" id="PR:F4I443"/>
<dbReference type="Proteomes" id="UP000006548">
    <property type="component" value="Chromosome 1"/>
</dbReference>
<dbReference type="ExpressionAtlas" id="F4I443">
    <property type="expression patterns" value="baseline and differential"/>
</dbReference>
<dbReference type="GO" id="GO:0005634">
    <property type="term" value="C:nucleus"/>
    <property type="evidence" value="ECO:0000314"/>
    <property type="project" value="UniProtKB"/>
</dbReference>
<dbReference type="GO" id="GO:0003677">
    <property type="term" value="F:DNA binding"/>
    <property type="evidence" value="ECO:0000314"/>
    <property type="project" value="TAIR"/>
</dbReference>
<dbReference type="GO" id="GO:0004842">
    <property type="term" value="F:ubiquitin-protein transferase activity"/>
    <property type="evidence" value="ECO:0000318"/>
    <property type="project" value="GO_Central"/>
</dbReference>
<dbReference type="GO" id="GO:0008270">
    <property type="term" value="F:zinc ion binding"/>
    <property type="evidence" value="ECO:0007669"/>
    <property type="project" value="UniProtKB-KW"/>
</dbReference>
<dbReference type="GO" id="GO:0006281">
    <property type="term" value="P:DNA repair"/>
    <property type="evidence" value="ECO:0000315"/>
    <property type="project" value="TAIR"/>
</dbReference>
<dbReference type="GO" id="GO:0000724">
    <property type="term" value="P:double-strand break repair via homologous recombination"/>
    <property type="evidence" value="ECO:0000315"/>
    <property type="project" value="UniProtKB"/>
</dbReference>
<dbReference type="GO" id="GO:0048366">
    <property type="term" value="P:leaf development"/>
    <property type="evidence" value="ECO:0000315"/>
    <property type="project" value="TAIR"/>
</dbReference>
<dbReference type="GO" id="GO:0010078">
    <property type="term" value="P:maintenance of root meristem identity"/>
    <property type="evidence" value="ECO:0000315"/>
    <property type="project" value="UniProtKB"/>
</dbReference>
<dbReference type="GO" id="GO:0010492">
    <property type="term" value="P:maintenance of shoot apical meristem identity"/>
    <property type="evidence" value="ECO:0000315"/>
    <property type="project" value="UniProtKB"/>
</dbReference>
<dbReference type="GO" id="GO:0045892">
    <property type="term" value="P:negative regulation of DNA-templated transcription"/>
    <property type="evidence" value="ECO:0000315"/>
    <property type="project" value="UniProtKB"/>
</dbReference>
<dbReference type="GO" id="GO:0045944">
    <property type="term" value="P:positive regulation of transcription by RNA polymerase II"/>
    <property type="evidence" value="ECO:0000318"/>
    <property type="project" value="GO_Central"/>
</dbReference>
<dbReference type="GO" id="GO:0065004">
    <property type="term" value="P:protein-DNA complex assembly"/>
    <property type="evidence" value="ECO:0000314"/>
    <property type="project" value="UniProtKB"/>
</dbReference>
<dbReference type="GO" id="GO:0009934">
    <property type="term" value="P:regulation of meristem structural organization"/>
    <property type="evidence" value="ECO:0000315"/>
    <property type="project" value="TAIR"/>
</dbReference>
<dbReference type="CDD" id="cd17734">
    <property type="entry name" value="BRCT_Bard1_rpt1"/>
    <property type="match status" value="1"/>
</dbReference>
<dbReference type="CDD" id="cd17720">
    <property type="entry name" value="BRCT_Bard1_rpt2"/>
    <property type="match status" value="1"/>
</dbReference>
<dbReference type="CDD" id="cd15571">
    <property type="entry name" value="ePHD"/>
    <property type="match status" value="1"/>
</dbReference>
<dbReference type="FunFam" id="3.40.50.10190:FF:000092">
    <property type="entry name" value="BRCA1-associated RING domain protein 1"/>
    <property type="match status" value="1"/>
</dbReference>
<dbReference type="FunFam" id="3.30.40.10:FF:000310">
    <property type="entry name" value="Breast cancer associated RING 1"/>
    <property type="match status" value="1"/>
</dbReference>
<dbReference type="FunFam" id="3.30.40.10:FF:000352">
    <property type="entry name" value="Breast cancer associated RING 1"/>
    <property type="match status" value="1"/>
</dbReference>
<dbReference type="FunFam" id="3.40.50.10190:FF:000006">
    <property type="entry name" value="Breast cancer type 1 susceptibility protein homolog"/>
    <property type="match status" value="1"/>
</dbReference>
<dbReference type="Gene3D" id="3.40.50.10190">
    <property type="entry name" value="BRCT domain"/>
    <property type="match status" value="2"/>
</dbReference>
<dbReference type="Gene3D" id="3.30.40.10">
    <property type="entry name" value="Zinc/RING finger domain, C3HC4 (zinc finger)"/>
    <property type="match status" value="2"/>
</dbReference>
<dbReference type="InterPro" id="IPR031099">
    <property type="entry name" value="BRCA1-associated"/>
</dbReference>
<dbReference type="InterPro" id="IPR001357">
    <property type="entry name" value="BRCT_dom"/>
</dbReference>
<dbReference type="InterPro" id="IPR036420">
    <property type="entry name" value="BRCT_dom_sf"/>
</dbReference>
<dbReference type="InterPro" id="IPR034732">
    <property type="entry name" value="EPHD"/>
</dbReference>
<dbReference type="InterPro" id="IPR001965">
    <property type="entry name" value="Znf_PHD"/>
</dbReference>
<dbReference type="InterPro" id="IPR001841">
    <property type="entry name" value="Znf_RING"/>
</dbReference>
<dbReference type="InterPro" id="IPR013083">
    <property type="entry name" value="Znf_RING/FYVE/PHD"/>
</dbReference>
<dbReference type="InterPro" id="IPR017907">
    <property type="entry name" value="Znf_RING_CS"/>
</dbReference>
<dbReference type="PANTHER" id="PTHR13763:SF9">
    <property type="entry name" value="BRCA1-ASSOCIATED RING DOMAIN PROTEIN 1"/>
    <property type="match status" value="1"/>
</dbReference>
<dbReference type="PANTHER" id="PTHR13763">
    <property type="entry name" value="BREAST CANCER TYPE 1 SUSCEPTIBILITY PROTEIN BRCA1"/>
    <property type="match status" value="1"/>
</dbReference>
<dbReference type="Pfam" id="PF00533">
    <property type="entry name" value="BRCT"/>
    <property type="match status" value="1"/>
</dbReference>
<dbReference type="Pfam" id="PF13923">
    <property type="entry name" value="zf-C3HC4_2"/>
    <property type="match status" value="1"/>
</dbReference>
<dbReference type="Pfam" id="PF13771">
    <property type="entry name" value="zf-HC5HC2H"/>
    <property type="match status" value="1"/>
</dbReference>
<dbReference type="SMART" id="SM00292">
    <property type="entry name" value="BRCT"/>
    <property type="match status" value="2"/>
</dbReference>
<dbReference type="SMART" id="SM00249">
    <property type="entry name" value="PHD"/>
    <property type="match status" value="1"/>
</dbReference>
<dbReference type="SMART" id="SM00184">
    <property type="entry name" value="RING"/>
    <property type="match status" value="2"/>
</dbReference>
<dbReference type="SUPFAM" id="SSF52113">
    <property type="entry name" value="BRCT domain"/>
    <property type="match status" value="2"/>
</dbReference>
<dbReference type="SUPFAM" id="SSF57850">
    <property type="entry name" value="RING/U-box"/>
    <property type="match status" value="1"/>
</dbReference>
<dbReference type="PROSITE" id="PS50172">
    <property type="entry name" value="BRCT"/>
    <property type="match status" value="2"/>
</dbReference>
<dbReference type="PROSITE" id="PS51805">
    <property type="entry name" value="EPHD"/>
    <property type="match status" value="1"/>
</dbReference>
<dbReference type="PROSITE" id="PS00518">
    <property type="entry name" value="ZF_RING_1"/>
    <property type="match status" value="1"/>
</dbReference>
<dbReference type="PROSITE" id="PS50089">
    <property type="entry name" value="ZF_RING_2"/>
    <property type="match status" value="1"/>
</dbReference>
<feature type="chain" id="PRO_0000432982" description="BRCA1-associated RING domain protein 1">
    <location>
        <begin position="1"/>
        <end position="714"/>
    </location>
</feature>
<feature type="domain" description="BRCT 1" evidence="1">
    <location>
        <begin position="482"/>
        <end position="577"/>
    </location>
</feature>
<feature type="domain" description="BRCT 2" evidence="1">
    <location>
        <begin position="598"/>
        <end position="713"/>
    </location>
</feature>
<feature type="zinc finger region" description="RING-type" evidence="2">
    <location>
        <begin position="25"/>
        <end position="63"/>
    </location>
</feature>
<feature type="zinc finger region" description="C2HC pre-PHD-type" evidence="3">
    <location>
        <begin position="331"/>
        <end position="382"/>
    </location>
</feature>
<feature type="zinc finger region" description="PHD-type" evidence="3">
    <location>
        <begin position="402"/>
        <end position="451"/>
    </location>
</feature>
<feature type="region of interest" description="Disordered" evidence="4">
    <location>
        <begin position="106"/>
        <end position="165"/>
    </location>
</feature>
<feature type="region of interest" description="Disordered" evidence="4">
    <location>
        <begin position="254"/>
        <end position="283"/>
    </location>
</feature>
<feature type="compositionally biased region" description="Basic and acidic residues" evidence="4">
    <location>
        <begin position="118"/>
        <end position="134"/>
    </location>
</feature>
<feature type="compositionally biased region" description="Low complexity" evidence="4">
    <location>
        <begin position="135"/>
        <end position="147"/>
    </location>
</feature>
<feature type="compositionally biased region" description="Basic and acidic residues" evidence="4">
    <location>
        <begin position="155"/>
        <end position="165"/>
    </location>
</feature>
<feature type="compositionally biased region" description="Basic and acidic residues" evidence="4">
    <location>
        <begin position="264"/>
        <end position="283"/>
    </location>
</feature>
<comment type="function">
    <text evidence="5 6 8">Binds specifically to H3K4me3 regions of target genes (e.g. WUS and WOX5) promoters to repress their transcription via chromatin remodeling. Required for the shoot apical meristem (SAM) organization and maintenance, by confining WUS expression to the organizing center, and for the quiescent center (QC) development in the root apical meristem (RAM), by repressing WOX5 expression in the root proximal meristem (PubMed:18591352, PubMed:25631790). Plays a role in DNA repair and in cell-cycle control. Required for the repair of DNA double-strand breaks (DSBs), both natural and induced by genotoxic stress, by homologous recombination (HR) (PubMed:16957774).</text>
</comment>
<comment type="subunit">
    <text evidence="5 6 8">Component of a DNA-protein complex on WUS and WOX5 promoters (PubMed:18591352, PubMed:25631790). Interacts with SYD (PubMed:18591352). Forms heterodimer with BRCA1 (PubMed:16957774).</text>
</comment>
<comment type="subcellular location">
    <subcellularLocation>
        <location evidence="5 12">Nucleus</location>
    </subcellularLocation>
</comment>
<comment type="alternative products">
    <event type="alternative splicing"/>
    <isoform>
        <id>F4I443-1</id>
        <name>1</name>
        <sequence type="displayed"/>
    </isoform>
    <text evidence="11">Additional isoforms seem to exist.</text>
</comment>
<comment type="tissue specificity">
    <text evidence="5 6">Expressed in the shoot apical meristem (SAM), roots, flowers, embryos and seedlings (PubMed:18591352). Mostly expressed in flowers and siliques, and, to a lower extent, in roots, rosette leaves, inflorescence and young cauline leaves (PubMed:16957774).</text>
</comment>
<comment type="developmental stage">
    <text evidence="6">Expressed specifically in the apical domains of the shoot apical meristem (SAM), inflorescences, ovules, anthers and embryos. In young seedlings, localized mainly in the outermost three to four cell layers of the main shoot apex and in developing leaf primordia and young leaves. Also present in the meristem zone of primary roots and in the initiation site of lateral roots.</text>
</comment>
<comment type="induction">
    <text evidence="7">Up-regulated by the transcription factor ERF114.</text>
</comment>
<comment type="disruption phenotype">
    <text evidence="5 6 8">Enhanced sensitivity to genotoxic stresses (e.g. bleomycin and mitomycin C (MMC)) due to reduced intrachromosomal homologous recombination (HR) (PubMed:16957774). Meristem defects associated with ectopic WUSCHEL expression at high levels (e.g. 238 fold higher than controls) mainly in the outermost cell layers instead of the organizing center (PubMed:18591352). Abnormal quiescent center (QC) in the root apical meristem (RAM) and defects in cell differentiation leading to short roots and loss of gravitropic response, probably due to defect in columella cell differentiation. Ectopic expression of WOX5 in RAM cells that normally express ROW1 (PubMed:25631790).</text>
</comment>
<comment type="sequence caution" evidence="11">
    <conflict type="erroneous gene model prediction">
        <sequence resource="EMBL-CDS" id="AAD10669"/>
    </conflict>
</comment>
<keyword id="KW-0025">Alternative splicing</keyword>
<keyword id="KW-0217">Developmental protein</keyword>
<keyword id="KW-0227">DNA damage</keyword>
<keyword id="KW-0234">DNA repair</keyword>
<keyword id="KW-0238">DNA-binding</keyword>
<keyword id="KW-0479">Metal-binding</keyword>
<keyword id="KW-0539">Nucleus</keyword>
<keyword id="KW-1185">Reference proteome</keyword>
<keyword id="KW-0677">Repeat</keyword>
<keyword id="KW-0678">Repressor</keyword>
<keyword id="KW-0804">Transcription</keyword>
<keyword id="KW-0805">Transcription regulation</keyword>
<keyword id="KW-0862">Zinc</keyword>
<keyword id="KW-0863">Zinc-finger</keyword>
<sequence length="714" mass="79690">MAEFTNMLMNPWVLHLQKLELELKCPLCLKLLNRPVLLPCDHVFCDSCVHKSSQVESGCPVCKSKHPKKARRDLRFMESVISIYKSLNAAVSVHLPQLQIPNDCNYKNDALNNSNSPKHGESEDSEMTDKDVSKRSGGTDSSSRDGSPLPTSEESDPRPKHQDWTEKQLSDHLLLYEFESEYDAANHTPESYTEQAAKNVRDITASEQPSNAARKRICGDSFIQESSPNPKTQDPTLLRLMESLRSDDPTDYVKAQNHQQLPKSHTEQDSKRKRDITASDAMENHLKVPKRENNLMQKSADIDCNGKCSANSDDQLSEKISKALEQTSSNITICGFCQSARVSEATGEMLHYSRGRPVDGDDIFRSNVIHVHSACIEWAPQVYYEGDTVKNLKAELARGMKIKCTKCSLKGAALGCFVKSCRRSYHVPCAREISRCRWDYEDFLLLCPAHSSVKFPNEKSGHRVSRAEPLPKINPAELCSLEQTPAFTKELVLCGSALSKSDKKLMESLAVRFNATISRYWNPSVTHVIASTDEKGACTRTLKVLMGILNGKWIINAAWMKASLKASQPVDEEPFEIQIDTQGCQDGPKTARLRAETNKPKLFEGLKFYFFGDFYKGYKEDLQNLVKVAGGTILNTEDELGAESSNNVNDQRSSSIVVYNIDPPHGCALGEEVTIIWQRANDAEALASQTGSRLVGHTWVLESIAGYKLHPVIG</sequence>
<gene>
    <name evidence="9" type="primary">BARD1</name>
    <name evidence="10" type="synonym">ROW1</name>
    <name evidence="13" type="ordered locus">At1g04020</name>
    <name evidence="14" type="ORF">F21M11.4</name>
</gene>
<organism evidence="15">
    <name type="scientific">Arabidopsis thaliana</name>
    <name type="common">Mouse-ear cress</name>
    <dbReference type="NCBI Taxonomy" id="3702"/>
    <lineage>
        <taxon>Eukaryota</taxon>
        <taxon>Viridiplantae</taxon>
        <taxon>Streptophyta</taxon>
        <taxon>Embryophyta</taxon>
        <taxon>Tracheophyta</taxon>
        <taxon>Spermatophyta</taxon>
        <taxon>Magnoliopsida</taxon>
        <taxon>eudicotyledons</taxon>
        <taxon>Gunneridae</taxon>
        <taxon>Pentapetalae</taxon>
        <taxon>rosids</taxon>
        <taxon>malvids</taxon>
        <taxon>Brassicales</taxon>
        <taxon>Brassicaceae</taxon>
        <taxon>Camelineae</taxon>
        <taxon>Arabidopsis</taxon>
    </lineage>
</organism>
<name>BARD1_ARATH</name>
<proteinExistence type="evidence at protein level"/>
<reference key="1">
    <citation type="journal article" date="2000" name="Nature">
        <title>Sequence and analysis of chromosome 1 of the plant Arabidopsis thaliana.</title>
        <authorList>
            <person name="Theologis A."/>
            <person name="Ecker J.R."/>
            <person name="Palm C.J."/>
            <person name="Federspiel N.A."/>
            <person name="Kaul S."/>
            <person name="White O."/>
            <person name="Alonso J."/>
            <person name="Altafi H."/>
            <person name="Araujo R."/>
            <person name="Bowman C.L."/>
            <person name="Brooks S.Y."/>
            <person name="Buehler E."/>
            <person name="Chan A."/>
            <person name="Chao Q."/>
            <person name="Chen H."/>
            <person name="Cheuk R.F."/>
            <person name="Chin C.W."/>
            <person name="Chung M.K."/>
            <person name="Conn L."/>
            <person name="Conway A.B."/>
            <person name="Conway A.R."/>
            <person name="Creasy T.H."/>
            <person name="Dewar K."/>
            <person name="Dunn P."/>
            <person name="Etgu P."/>
            <person name="Feldblyum T.V."/>
            <person name="Feng J.-D."/>
            <person name="Fong B."/>
            <person name="Fujii C.Y."/>
            <person name="Gill J.E."/>
            <person name="Goldsmith A.D."/>
            <person name="Haas B."/>
            <person name="Hansen N.F."/>
            <person name="Hughes B."/>
            <person name="Huizar L."/>
            <person name="Hunter J.L."/>
            <person name="Jenkins J."/>
            <person name="Johnson-Hopson C."/>
            <person name="Khan S."/>
            <person name="Khaykin E."/>
            <person name="Kim C.J."/>
            <person name="Koo H.L."/>
            <person name="Kremenetskaia I."/>
            <person name="Kurtz D.B."/>
            <person name="Kwan A."/>
            <person name="Lam B."/>
            <person name="Langin-Hooper S."/>
            <person name="Lee A."/>
            <person name="Lee J.M."/>
            <person name="Lenz C.A."/>
            <person name="Li J.H."/>
            <person name="Li Y.-P."/>
            <person name="Lin X."/>
            <person name="Liu S.X."/>
            <person name="Liu Z.A."/>
            <person name="Luros J.S."/>
            <person name="Maiti R."/>
            <person name="Marziali A."/>
            <person name="Militscher J."/>
            <person name="Miranda M."/>
            <person name="Nguyen M."/>
            <person name="Nierman W.C."/>
            <person name="Osborne B.I."/>
            <person name="Pai G."/>
            <person name="Peterson J."/>
            <person name="Pham P.K."/>
            <person name="Rizzo M."/>
            <person name="Rooney T."/>
            <person name="Rowley D."/>
            <person name="Sakano H."/>
            <person name="Salzberg S.L."/>
            <person name="Schwartz J.R."/>
            <person name="Shinn P."/>
            <person name="Southwick A.M."/>
            <person name="Sun H."/>
            <person name="Tallon L.J."/>
            <person name="Tambunga G."/>
            <person name="Toriumi M.J."/>
            <person name="Town C.D."/>
            <person name="Utterback T."/>
            <person name="Van Aken S."/>
            <person name="Vaysberg M."/>
            <person name="Vysotskaia V.S."/>
            <person name="Walker M."/>
            <person name="Wu D."/>
            <person name="Yu G."/>
            <person name="Fraser C.M."/>
            <person name="Venter J.C."/>
            <person name="Davis R.W."/>
        </authorList>
    </citation>
    <scope>NUCLEOTIDE SEQUENCE [LARGE SCALE GENOMIC DNA]</scope>
    <source>
        <strain>cv. Columbia</strain>
    </source>
</reference>
<reference key="2">
    <citation type="journal article" date="2017" name="Plant J.">
        <title>Araport11: a complete reannotation of the Arabidopsis thaliana reference genome.</title>
        <authorList>
            <person name="Cheng C.Y."/>
            <person name="Krishnakumar V."/>
            <person name="Chan A.P."/>
            <person name="Thibaud-Nissen F."/>
            <person name="Schobel S."/>
            <person name="Town C.D."/>
        </authorList>
    </citation>
    <scope>GENOME REANNOTATION</scope>
    <source>
        <strain>cv. Columbia</strain>
    </source>
</reference>
<reference key="3">
    <citation type="journal article" date="2008" name="Plant Cell">
        <title>Mutation of Arabidopsis BARD1 causes meristem defects by failing to confine WUSCHEL expression to the organizing center.</title>
        <authorList>
            <person name="Han P."/>
            <person name="Li Q."/>
            <person name="Zhu Y.-X."/>
        </authorList>
    </citation>
    <scope>NUCLEOTIDE SEQUENCE [MRNA] OF 47-714 (ISOFORM 1)</scope>
    <scope>FUNCTION</scope>
    <scope>DISRUPTION PHENOTYPE</scope>
    <scope>SUBCELLULAR LOCATION</scope>
    <scope>TISSUE SPECIFICITY</scope>
    <scope>DEVELOPMENTAL STAGE</scope>
    <scope>SUBUNIT</scope>
    <scope>INTERACTION WITH SYD</scope>
</reference>
<reference key="4">
    <citation type="journal article" date="2006" name="EMBO J.">
        <title>A homologue of the breast cancer-associated gene BARD1 is involved in DNA repair in plants.</title>
        <authorList>
            <person name="Reidt W."/>
            <person name="Wurz R."/>
            <person name="Wanieck K."/>
            <person name="Chu H.H."/>
            <person name="Puchta H."/>
        </authorList>
    </citation>
    <scope>FUNCTION</scope>
    <scope>DISRUPTION PHENOTYPE</scope>
    <scope>INTERACTION WITH BRCA1</scope>
    <scope>TISSUE SPECIFICITY</scope>
    <scope>SUBCELLULAR LOCATION</scope>
</reference>
<reference key="5">
    <citation type="journal article" date="2009" name="Plant Signal. Behav.">
        <title>BARD1 may be renamed ROW1 because it functions mainly as a REPRESSOR OF WUSCHEL1.</title>
        <authorList>
            <person name="Han P."/>
            <person name="Zhu Y.-X."/>
        </authorList>
    </citation>
    <scope>REVIEW</scope>
</reference>
<reference key="6">
    <citation type="journal article" date="2011" name="Front. Plant Sci.">
        <title>Homologs of breast cancer genes in plants.</title>
        <authorList>
            <person name="Trapp O."/>
            <person name="Seeliger K."/>
            <person name="Puchta H."/>
        </authorList>
    </citation>
    <scope>REVIEW</scope>
    <scope>GENE FAMILY</scope>
</reference>
<reference key="7">
    <citation type="journal article" date="2013" name="Plant Physiol.">
        <title>EBE, an AP2/ERF transcription factor highly expressed in proliferating cells, affects shoot architecture in Arabidopsis.</title>
        <authorList>
            <person name="Mehrnia M."/>
            <person name="Balazadeh S."/>
            <person name="Zanor M.I."/>
            <person name="Mueller-Roeber B."/>
        </authorList>
    </citation>
    <scope>INDUCTION BY ERF114</scope>
</reference>
<reference key="8">
    <citation type="journal article" date="2015" name="Nat. Commun.">
        <title>ROW1 maintains quiescent centre identity by confining WOX5 expression to specific cells.</title>
        <authorList>
            <person name="Zhang Y."/>
            <person name="Jiao Y."/>
            <person name="Liu Z."/>
            <person name="Zhu Y.-X."/>
        </authorList>
    </citation>
    <scope>FUNCTION</scope>
    <scope>DISRUPTION PHENOTYPE</scope>
    <scope>SUBUNIT</scope>
    <source>
        <strain>cv. Columbia</strain>
    </source>
</reference>
<protein>
    <recommendedName>
        <fullName evidence="9">BRCA1-associated RING domain protein 1</fullName>
        <shortName evidence="9">AtBARD1</shortName>
    </recommendedName>
    <alternativeName>
        <fullName evidence="10">Protein REPRESSOR OF WUSCHEL 1</fullName>
    </alternativeName>
</protein>
<accession>F4I443</accession>
<accession>B5A7D6</accession>
<accession>B5A7D7</accession>
<accession>Q9ZWC2</accession>
<evidence type="ECO:0000255" key="1">
    <source>
        <dbReference type="PROSITE-ProRule" id="PRU00033"/>
    </source>
</evidence>
<evidence type="ECO:0000255" key="2">
    <source>
        <dbReference type="PROSITE-ProRule" id="PRU00175"/>
    </source>
</evidence>
<evidence type="ECO:0000255" key="3">
    <source>
        <dbReference type="PROSITE-ProRule" id="PRU01146"/>
    </source>
</evidence>
<evidence type="ECO:0000256" key="4">
    <source>
        <dbReference type="SAM" id="MobiDB-lite"/>
    </source>
</evidence>
<evidence type="ECO:0000269" key="5">
    <source>
    </source>
</evidence>
<evidence type="ECO:0000269" key="6">
    <source>
    </source>
</evidence>
<evidence type="ECO:0000269" key="7">
    <source>
    </source>
</evidence>
<evidence type="ECO:0000269" key="8">
    <source>
    </source>
</evidence>
<evidence type="ECO:0000303" key="9">
    <source>
    </source>
</evidence>
<evidence type="ECO:0000303" key="10">
    <source>
    </source>
</evidence>
<evidence type="ECO:0000305" key="11"/>
<evidence type="ECO:0000305" key="12">
    <source>
    </source>
</evidence>
<evidence type="ECO:0000312" key="13">
    <source>
        <dbReference type="Araport" id="AT1G04020"/>
    </source>
</evidence>
<evidence type="ECO:0000312" key="14">
    <source>
        <dbReference type="EMBL" id="AAD10669.1"/>
    </source>
</evidence>
<evidence type="ECO:0000312" key="15">
    <source>
        <dbReference type="Proteomes" id="UP000006548"/>
    </source>
</evidence>